<sequence>MSNRKYFGTDGIRGRVGDAPITPDFVLKLGWAAGKVLARHGSRKIIIGKDTRISGYMLESALEAGLAAAGLSALFTGPMPTPAVAYLTRTFRAEAGIVISASHNPFYDNGIKFFSIDGTKLPDAVEEAIEAEMEKEISCVDSAELGKASRIVDAAGRYIEFCKATFPNELSLSELKIVVDCANGATYHIAPNVLRELGANVIAIGCEPNGVNINAEVGATDVRALQARVLAEKADLGIAFDGDGDRVIMVDHEGNKVDGDQIMYIIAREGLRQGQLRGGAVGTLMSNMGLELALKQLGIPFARAKVGDRYVLEKMQEKGWRIGAENSGHVILLDKTTTGDGIVAGLQVLAAMARNHMSLHDLCSGMKMFPQILVNVRYTAGSGDPLEHESVKAVTAEVEAALGSRGRVLLRKSGTEPLIRVMVEGEDEAQVTEFAHRIADAVKAV</sequence>
<accession>Q0TCT4</accession>
<organism>
    <name type="scientific">Escherichia coli O6:K15:H31 (strain 536 / UPEC)</name>
    <dbReference type="NCBI Taxonomy" id="362663"/>
    <lineage>
        <taxon>Bacteria</taxon>
        <taxon>Pseudomonadati</taxon>
        <taxon>Pseudomonadota</taxon>
        <taxon>Gammaproteobacteria</taxon>
        <taxon>Enterobacterales</taxon>
        <taxon>Enterobacteriaceae</taxon>
        <taxon>Escherichia</taxon>
    </lineage>
</organism>
<gene>
    <name evidence="1" type="primary">glmM</name>
    <name type="ordered locus">ECP_3263</name>
</gene>
<protein>
    <recommendedName>
        <fullName evidence="1">Phosphoglucosamine mutase</fullName>
        <ecNumber evidence="1">5.4.2.10</ecNumber>
    </recommendedName>
</protein>
<proteinExistence type="inferred from homology"/>
<keyword id="KW-0413">Isomerase</keyword>
<keyword id="KW-0460">Magnesium</keyword>
<keyword id="KW-0479">Metal-binding</keyword>
<keyword id="KW-0597">Phosphoprotein</keyword>
<reference key="1">
    <citation type="journal article" date="2006" name="Mol. Microbiol.">
        <title>Role of pathogenicity island-associated integrases in the genome plasticity of uropathogenic Escherichia coli strain 536.</title>
        <authorList>
            <person name="Hochhut B."/>
            <person name="Wilde C."/>
            <person name="Balling G."/>
            <person name="Middendorf B."/>
            <person name="Dobrindt U."/>
            <person name="Brzuszkiewicz E."/>
            <person name="Gottschalk G."/>
            <person name="Carniel E."/>
            <person name="Hacker J."/>
        </authorList>
    </citation>
    <scope>NUCLEOTIDE SEQUENCE [LARGE SCALE GENOMIC DNA]</scope>
    <source>
        <strain>536 / UPEC</strain>
    </source>
</reference>
<feature type="chain" id="PRO_0000301312" description="Phosphoglucosamine mutase">
    <location>
        <begin position="1"/>
        <end position="445"/>
    </location>
</feature>
<feature type="active site" description="Phosphoserine intermediate" evidence="1">
    <location>
        <position position="102"/>
    </location>
</feature>
<feature type="binding site" description="via phosphate group" evidence="1">
    <location>
        <position position="102"/>
    </location>
    <ligand>
        <name>Mg(2+)</name>
        <dbReference type="ChEBI" id="CHEBI:18420"/>
    </ligand>
</feature>
<feature type="binding site" evidence="1">
    <location>
        <position position="241"/>
    </location>
    <ligand>
        <name>Mg(2+)</name>
        <dbReference type="ChEBI" id="CHEBI:18420"/>
    </ligand>
</feature>
<feature type="binding site" evidence="1">
    <location>
        <position position="243"/>
    </location>
    <ligand>
        <name>Mg(2+)</name>
        <dbReference type="ChEBI" id="CHEBI:18420"/>
    </ligand>
</feature>
<feature type="binding site" evidence="1">
    <location>
        <position position="245"/>
    </location>
    <ligand>
        <name>Mg(2+)</name>
        <dbReference type="ChEBI" id="CHEBI:18420"/>
    </ligand>
</feature>
<feature type="modified residue" description="Phosphoserine" evidence="1">
    <location>
        <position position="102"/>
    </location>
</feature>
<comment type="function">
    <text evidence="1">Catalyzes the conversion of glucosamine-6-phosphate to glucosamine-1-phosphate.</text>
</comment>
<comment type="catalytic activity">
    <reaction evidence="1">
        <text>alpha-D-glucosamine 1-phosphate = D-glucosamine 6-phosphate</text>
        <dbReference type="Rhea" id="RHEA:23424"/>
        <dbReference type="ChEBI" id="CHEBI:58516"/>
        <dbReference type="ChEBI" id="CHEBI:58725"/>
        <dbReference type="EC" id="5.4.2.10"/>
    </reaction>
</comment>
<comment type="cofactor">
    <cofactor evidence="1">
        <name>Mg(2+)</name>
        <dbReference type="ChEBI" id="CHEBI:18420"/>
    </cofactor>
    <text evidence="1">Binds 1 Mg(2+) ion per subunit.</text>
</comment>
<comment type="PTM">
    <text evidence="1">Activated by phosphorylation.</text>
</comment>
<comment type="similarity">
    <text evidence="1">Belongs to the phosphohexose mutase family.</text>
</comment>
<dbReference type="EC" id="5.4.2.10" evidence="1"/>
<dbReference type="EMBL" id="CP000247">
    <property type="protein sequence ID" value="ABG71245.1"/>
    <property type="molecule type" value="Genomic_DNA"/>
</dbReference>
<dbReference type="RefSeq" id="WP_000071137.1">
    <property type="nucleotide sequence ID" value="NC_008253.1"/>
</dbReference>
<dbReference type="SMR" id="Q0TCT4"/>
<dbReference type="GeneID" id="93778805"/>
<dbReference type="KEGG" id="ecp:ECP_3263"/>
<dbReference type="HOGENOM" id="CLU_016950_7_0_6"/>
<dbReference type="Proteomes" id="UP000009182">
    <property type="component" value="Chromosome"/>
</dbReference>
<dbReference type="GO" id="GO:0005829">
    <property type="term" value="C:cytosol"/>
    <property type="evidence" value="ECO:0007669"/>
    <property type="project" value="TreeGrafter"/>
</dbReference>
<dbReference type="GO" id="GO:0000287">
    <property type="term" value="F:magnesium ion binding"/>
    <property type="evidence" value="ECO:0007669"/>
    <property type="project" value="UniProtKB-UniRule"/>
</dbReference>
<dbReference type="GO" id="GO:0008966">
    <property type="term" value="F:phosphoglucosamine mutase activity"/>
    <property type="evidence" value="ECO:0007669"/>
    <property type="project" value="UniProtKB-UniRule"/>
</dbReference>
<dbReference type="GO" id="GO:0004615">
    <property type="term" value="F:phosphomannomutase activity"/>
    <property type="evidence" value="ECO:0007669"/>
    <property type="project" value="TreeGrafter"/>
</dbReference>
<dbReference type="GO" id="GO:0005975">
    <property type="term" value="P:carbohydrate metabolic process"/>
    <property type="evidence" value="ECO:0007669"/>
    <property type="project" value="InterPro"/>
</dbReference>
<dbReference type="GO" id="GO:0009252">
    <property type="term" value="P:peptidoglycan biosynthetic process"/>
    <property type="evidence" value="ECO:0007669"/>
    <property type="project" value="TreeGrafter"/>
</dbReference>
<dbReference type="GO" id="GO:0006048">
    <property type="term" value="P:UDP-N-acetylglucosamine biosynthetic process"/>
    <property type="evidence" value="ECO:0007669"/>
    <property type="project" value="TreeGrafter"/>
</dbReference>
<dbReference type="CDD" id="cd05802">
    <property type="entry name" value="GlmM"/>
    <property type="match status" value="1"/>
</dbReference>
<dbReference type="FunFam" id="3.30.310.50:FF:000001">
    <property type="entry name" value="Phosphoglucosamine mutase"/>
    <property type="match status" value="1"/>
</dbReference>
<dbReference type="FunFam" id="3.40.120.10:FF:000001">
    <property type="entry name" value="Phosphoglucosamine mutase"/>
    <property type="match status" value="1"/>
</dbReference>
<dbReference type="FunFam" id="3.40.120.10:FF:000002">
    <property type="entry name" value="Phosphoglucosamine mutase"/>
    <property type="match status" value="1"/>
</dbReference>
<dbReference type="Gene3D" id="3.40.120.10">
    <property type="entry name" value="Alpha-D-Glucose-1,6-Bisphosphate, subunit A, domain 3"/>
    <property type="match status" value="3"/>
</dbReference>
<dbReference type="Gene3D" id="3.30.310.50">
    <property type="entry name" value="Alpha-D-phosphohexomutase, C-terminal domain"/>
    <property type="match status" value="1"/>
</dbReference>
<dbReference type="HAMAP" id="MF_01554_B">
    <property type="entry name" value="GlmM_B"/>
    <property type="match status" value="1"/>
</dbReference>
<dbReference type="InterPro" id="IPR005844">
    <property type="entry name" value="A-D-PHexomutase_a/b/a-I"/>
</dbReference>
<dbReference type="InterPro" id="IPR016055">
    <property type="entry name" value="A-D-PHexomutase_a/b/a-I/II/III"/>
</dbReference>
<dbReference type="InterPro" id="IPR005845">
    <property type="entry name" value="A-D-PHexomutase_a/b/a-II"/>
</dbReference>
<dbReference type="InterPro" id="IPR005846">
    <property type="entry name" value="A-D-PHexomutase_a/b/a-III"/>
</dbReference>
<dbReference type="InterPro" id="IPR005843">
    <property type="entry name" value="A-D-PHexomutase_C"/>
</dbReference>
<dbReference type="InterPro" id="IPR036900">
    <property type="entry name" value="A-D-PHexomutase_C_sf"/>
</dbReference>
<dbReference type="InterPro" id="IPR016066">
    <property type="entry name" value="A-D-PHexomutase_CS"/>
</dbReference>
<dbReference type="InterPro" id="IPR005841">
    <property type="entry name" value="Alpha-D-phosphohexomutase_SF"/>
</dbReference>
<dbReference type="InterPro" id="IPR006352">
    <property type="entry name" value="GlmM_bact"/>
</dbReference>
<dbReference type="InterPro" id="IPR050060">
    <property type="entry name" value="Phosphoglucosamine_mutase"/>
</dbReference>
<dbReference type="NCBIfam" id="TIGR01455">
    <property type="entry name" value="glmM"/>
    <property type="match status" value="1"/>
</dbReference>
<dbReference type="NCBIfam" id="NF008139">
    <property type="entry name" value="PRK10887.1"/>
    <property type="match status" value="1"/>
</dbReference>
<dbReference type="PANTHER" id="PTHR42946:SF1">
    <property type="entry name" value="PHOSPHOGLUCOMUTASE (ALPHA-D-GLUCOSE-1,6-BISPHOSPHATE-DEPENDENT)"/>
    <property type="match status" value="1"/>
</dbReference>
<dbReference type="PANTHER" id="PTHR42946">
    <property type="entry name" value="PHOSPHOHEXOSE MUTASE"/>
    <property type="match status" value="1"/>
</dbReference>
<dbReference type="Pfam" id="PF02878">
    <property type="entry name" value="PGM_PMM_I"/>
    <property type="match status" value="1"/>
</dbReference>
<dbReference type="Pfam" id="PF02879">
    <property type="entry name" value="PGM_PMM_II"/>
    <property type="match status" value="1"/>
</dbReference>
<dbReference type="Pfam" id="PF02880">
    <property type="entry name" value="PGM_PMM_III"/>
    <property type="match status" value="1"/>
</dbReference>
<dbReference type="Pfam" id="PF00408">
    <property type="entry name" value="PGM_PMM_IV"/>
    <property type="match status" value="1"/>
</dbReference>
<dbReference type="PRINTS" id="PR00509">
    <property type="entry name" value="PGMPMM"/>
</dbReference>
<dbReference type="SUPFAM" id="SSF55957">
    <property type="entry name" value="Phosphoglucomutase, C-terminal domain"/>
    <property type="match status" value="1"/>
</dbReference>
<dbReference type="SUPFAM" id="SSF53738">
    <property type="entry name" value="Phosphoglucomutase, first 3 domains"/>
    <property type="match status" value="3"/>
</dbReference>
<dbReference type="PROSITE" id="PS00710">
    <property type="entry name" value="PGM_PMM"/>
    <property type="match status" value="1"/>
</dbReference>
<evidence type="ECO:0000255" key="1">
    <source>
        <dbReference type="HAMAP-Rule" id="MF_01554"/>
    </source>
</evidence>
<name>GLMM_ECOL5</name>